<evidence type="ECO:0000255" key="1">
    <source>
        <dbReference type="HAMAP-Rule" id="MF_00014"/>
    </source>
</evidence>
<proteinExistence type="inferred from homology"/>
<accession>A9MGT6</accession>
<dbReference type="EMBL" id="CP000880">
    <property type="protein sequence ID" value="ABX20197.1"/>
    <property type="molecule type" value="Genomic_DNA"/>
</dbReference>
<dbReference type="SMR" id="A9MGT6"/>
<dbReference type="STRING" id="41514.SARI_00251"/>
<dbReference type="KEGG" id="ses:SARI_00251"/>
<dbReference type="HOGENOM" id="CLU_077636_1_0_6"/>
<dbReference type="Proteomes" id="UP000002084">
    <property type="component" value="Chromosome"/>
</dbReference>
<dbReference type="GO" id="GO:0005737">
    <property type="term" value="C:cytoplasm"/>
    <property type="evidence" value="ECO:0007669"/>
    <property type="project" value="UniProtKB-SubCell"/>
</dbReference>
<dbReference type="GO" id="GO:0005840">
    <property type="term" value="C:ribosome"/>
    <property type="evidence" value="ECO:0007669"/>
    <property type="project" value="InterPro"/>
</dbReference>
<dbReference type="GO" id="GO:0043022">
    <property type="term" value="F:ribosome binding"/>
    <property type="evidence" value="ECO:0007669"/>
    <property type="project" value="InterPro"/>
</dbReference>
<dbReference type="GO" id="GO:0042274">
    <property type="term" value="P:ribosomal small subunit biogenesis"/>
    <property type="evidence" value="ECO:0007669"/>
    <property type="project" value="UniProtKB-UniRule"/>
</dbReference>
<dbReference type="GO" id="GO:0006364">
    <property type="term" value="P:rRNA processing"/>
    <property type="evidence" value="ECO:0007669"/>
    <property type="project" value="UniProtKB-UniRule"/>
</dbReference>
<dbReference type="FunFam" id="2.30.30.240:FF:000001">
    <property type="entry name" value="Ribosome maturation factor RimM"/>
    <property type="match status" value="1"/>
</dbReference>
<dbReference type="FunFam" id="2.40.30.60:FF:000001">
    <property type="entry name" value="Ribosome maturation factor RimM"/>
    <property type="match status" value="1"/>
</dbReference>
<dbReference type="Gene3D" id="2.30.30.240">
    <property type="entry name" value="PRC-barrel domain"/>
    <property type="match status" value="1"/>
</dbReference>
<dbReference type="Gene3D" id="2.40.30.60">
    <property type="entry name" value="RimM"/>
    <property type="match status" value="1"/>
</dbReference>
<dbReference type="HAMAP" id="MF_00014">
    <property type="entry name" value="Ribosome_mat_RimM"/>
    <property type="match status" value="1"/>
</dbReference>
<dbReference type="InterPro" id="IPR011033">
    <property type="entry name" value="PRC_barrel-like_sf"/>
</dbReference>
<dbReference type="InterPro" id="IPR056792">
    <property type="entry name" value="PRC_RimM"/>
</dbReference>
<dbReference type="InterPro" id="IPR011961">
    <property type="entry name" value="RimM"/>
</dbReference>
<dbReference type="InterPro" id="IPR002676">
    <property type="entry name" value="RimM_N"/>
</dbReference>
<dbReference type="InterPro" id="IPR036976">
    <property type="entry name" value="RimM_N_sf"/>
</dbReference>
<dbReference type="InterPro" id="IPR009000">
    <property type="entry name" value="Transl_B-barrel_sf"/>
</dbReference>
<dbReference type="NCBIfam" id="TIGR02273">
    <property type="entry name" value="16S_RimM"/>
    <property type="match status" value="1"/>
</dbReference>
<dbReference type="PANTHER" id="PTHR33692">
    <property type="entry name" value="RIBOSOME MATURATION FACTOR RIMM"/>
    <property type="match status" value="1"/>
</dbReference>
<dbReference type="PANTHER" id="PTHR33692:SF1">
    <property type="entry name" value="RIBOSOME MATURATION FACTOR RIMM"/>
    <property type="match status" value="1"/>
</dbReference>
<dbReference type="Pfam" id="PF24986">
    <property type="entry name" value="PRC_RimM"/>
    <property type="match status" value="1"/>
</dbReference>
<dbReference type="Pfam" id="PF01782">
    <property type="entry name" value="RimM"/>
    <property type="match status" value="1"/>
</dbReference>
<dbReference type="SUPFAM" id="SSF50346">
    <property type="entry name" value="PRC-barrel domain"/>
    <property type="match status" value="1"/>
</dbReference>
<dbReference type="SUPFAM" id="SSF50447">
    <property type="entry name" value="Translation proteins"/>
    <property type="match status" value="1"/>
</dbReference>
<gene>
    <name evidence="1" type="primary">rimM</name>
    <name type="ordered locus">SARI_00251</name>
</gene>
<organism>
    <name type="scientific">Salmonella arizonae (strain ATCC BAA-731 / CDC346-86 / RSK2980)</name>
    <dbReference type="NCBI Taxonomy" id="41514"/>
    <lineage>
        <taxon>Bacteria</taxon>
        <taxon>Pseudomonadati</taxon>
        <taxon>Pseudomonadota</taxon>
        <taxon>Gammaproteobacteria</taxon>
        <taxon>Enterobacterales</taxon>
        <taxon>Enterobacteriaceae</taxon>
        <taxon>Salmonella</taxon>
    </lineage>
</organism>
<feature type="chain" id="PRO_1000074038" description="Ribosome maturation factor RimM">
    <location>
        <begin position="1"/>
        <end position="183"/>
    </location>
</feature>
<feature type="domain" description="PRC barrel" evidence="1">
    <location>
        <begin position="104"/>
        <end position="183"/>
    </location>
</feature>
<keyword id="KW-0143">Chaperone</keyword>
<keyword id="KW-0963">Cytoplasm</keyword>
<keyword id="KW-1185">Reference proteome</keyword>
<keyword id="KW-0690">Ribosome biogenesis</keyword>
<keyword id="KW-0698">rRNA processing</keyword>
<protein>
    <recommendedName>
        <fullName evidence="1">Ribosome maturation factor RimM</fullName>
    </recommendedName>
</protein>
<reference key="1">
    <citation type="submission" date="2007-11" db="EMBL/GenBank/DDBJ databases">
        <authorList>
            <consortium name="The Salmonella enterica serovar Arizonae Genome Sequencing Project"/>
            <person name="McClelland M."/>
            <person name="Sanderson E.K."/>
            <person name="Porwollik S."/>
            <person name="Spieth J."/>
            <person name="Clifton W.S."/>
            <person name="Fulton R."/>
            <person name="Chunyan W."/>
            <person name="Wollam A."/>
            <person name="Shah N."/>
            <person name="Pepin K."/>
            <person name="Bhonagiri V."/>
            <person name="Nash W."/>
            <person name="Johnson M."/>
            <person name="Thiruvilangam P."/>
            <person name="Wilson R."/>
        </authorList>
    </citation>
    <scope>NUCLEOTIDE SEQUENCE [LARGE SCALE GENOMIC DNA]</scope>
    <source>
        <strain>ATCC BAA-731 / CDC346-86 / RSK2980</strain>
    </source>
</reference>
<name>RIMM_SALAR</name>
<sequence>MMGKQLTAQVPAEPVVLGKMGSSYGIRGWLRVFSSTEDAESIFDYQPWFIQKADQWQQVQLESWKHHNQDLIIKLKGVDDRDAANLLTNCEIVVDSSQLPALEEGDYYWKDLMGCQVVTAEGYDLGKVIDMMETGSNDVLVIKANLKDAFGIKERLVPFLDGQVIKKVDLATRTIEVDWDPGF</sequence>
<comment type="function">
    <text evidence="1">An accessory protein needed during the final step in the assembly of 30S ribosomal subunit, possibly for assembly of the head region. Essential for efficient processing of 16S rRNA. May be needed both before and after RbfA during the maturation of 16S rRNA. It has affinity for free ribosomal 30S subunits but not for 70S ribosomes.</text>
</comment>
<comment type="subunit">
    <text evidence="1">Binds ribosomal protein uS19.</text>
</comment>
<comment type="subcellular location">
    <subcellularLocation>
        <location evidence="1">Cytoplasm</location>
    </subcellularLocation>
</comment>
<comment type="domain">
    <text evidence="1">The PRC barrel domain binds ribosomal protein uS19.</text>
</comment>
<comment type="similarity">
    <text evidence="1">Belongs to the RimM family.</text>
</comment>